<dbReference type="EC" id="2.7.2.17" evidence="1"/>
<dbReference type="EC" id="2.7.2.19" evidence="1"/>
<dbReference type="EMBL" id="CP001403">
    <property type="protein sequence ID" value="ACP46358.1"/>
    <property type="molecule type" value="Genomic_DNA"/>
</dbReference>
<dbReference type="RefSeq" id="WP_012711951.1">
    <property type="nucleotide sequence ID" value="NC_012622.1"/>
</dbReference>
<dbReference type="SMR" id="C3N871"/>
<dbReference type="KEGG" id="siy:YG5714_2106"/>
<dbReference type="HOGENOM" id="CLU_053680_2_0_2"/>
<dbReference type="UniPathway" id="UPA00033">
    <property type="reaction ID" value="UER00036"/>
</dbReference>
<dbReference type="UniPathway" id="UPA00068"/>
<dbReference type="Proteomes" id="UP000002308">
    <property type="component" value="Chromosome"/>
</dbReference>
<dbReference type="GO" id="GO:0005737">
    <property type="term" value="C:cytoplasm"/>
    <property type="evidence" value="ECO:0007669"/>
    <property type="project" value="UniProtKB-SubCell"/>
</dbReference>
<dbReference type="GO" id="GO:0003991">
    <property type="term" value="F:acetylglutamate kinase activity"/>
    <property type="evidence" value="ECO:0007669"/>
    <property type="project" value="TreeGrafter"/>
</dbReference>
<dbReference type="GO" id="GO:0005524">
    <property type="term" value="F:ATP binding"/>
    <property type="evidence" value="ECO:0007669"/>
    <property type="project" value="UniProtKB-KW"/>
</dbReference>
<dbReference type="GO" id="GO:0043744">
    <property type="term" value="F:N2-acetyl-L-aminoadipate kinase activity"/>
    <property type="evidence" value="ECO:0007669"/>
    <property type="project" value="RHEA"/>
</dbReference>
<dbReference type="GO" id="GO:0042450">
    <property type="term" value="P:arginine biosynthetic process via ornithine"/>
    <property type="evidence" value="ECO:0007669"/>
    <property type="project" value="UniProtKB-UniRule"/>
</dbReference>
<dbReference type="GO" id="GO:0006526">
    <property type="term" value="P:L-arginine biosynthetic process"/>
    <property type="evidence" value="ECO:0007669"/>
    <property type="project" value="UniProtKB-UniPathway"/>
</dbReference>
<dbReference type="GO" id="GO:0019878">
    <property type="term" value="P:lysine biosynthetic process via aminoadipic acid"/>
    <property type="evidence" value="ECO:0007669"/>
    <property type="project" value="UniProtKB-UniRule"/>
</dbReference>
<dbReference type="CDD" id="cd04251">
    <property type="entry name" value="AAK_NAGK-UC"/>
    <property type="match status" value="1"/>
</dbReference>
<dbReference type="Gene3D" id="3.40.1160.10">
    <property type="entry name" value="Acetylglutamate kinase-like"/>
    <property type="match status" value="1"/>
</dbReference>
<dbReference type="HAMAP" id="MF_02082">
    <property type="entry name" value="LysZ"/>
    <property type="match status" value="1"/>
</dbReference>
<dbReference type="InterPro" id="IPR036393">
    <property type="entry name" value="AceGlu_kinase-like_sf"/>
</dbReference>
<dbReference type="InterPro" id="IPR004662">
    <property type="entry name" value="AcgluKinase_fam"/>
</dbReference>
<dbReference type="InterPro" id="IPR001048">
    <property type="entry name" value="Asp/Glu/Uridylate_kinase"/>
</dbReference>
<dbReference type="InterPro" id="IPR037529">
    <property type="entry name" value="LysZ"/>
</dbReference>
<dbReference type="NCBIfam" id="TIGR00761">
    <property type="entry name" value="argB"/>
    <property type="match status" value="1"/>
</dbReference>
<dbReference type="NCBIfam" id="NF010662">
    <property type="entry name" value="PRK14058.1-4"/>
    <property type="match status" value="1"/>
</dbReference>
<dbReference type="PANTHER" id="PTHR23342">
    <property type="entry name" value="N-ACETYLGLUTAMATE SYNTHASE"/>
    <property type="match status" value="1"/>
</dbReference>
<dbReference type="PANTHER" id="PTHR23342:SF0">
    <property type="entry name" value="N-ACETYLGLUTAMATE SYNTHASE, MITOCHONDRIAL"/>
    <property type="match status" value="1"/>
</dbReference>
<dbReference type="Pfam" id="PF00696">
    <property type="entry name" value="AA_kinase"/>
    <property type="match status" value="1"/>
</dbReference>
<dbReference type="PIRSF" id="PIRSF000728">
    <property type="entry name" value="NAGK"/>
    <property type="match status" value="1"/>
</dbReference>
<dbReference type="SUPFAM" id="SSF53633">
    <property type="entry name" value="Carbamate kinase-like"/>
    <property type="match status" value="1"/>
</dbReference>
<gene>
    <name evidence="1" type="primary">lysZ</name>
    <name type="ordered locus">YG5714_2106</name>
</gene>
<name>LYSZ_SACI7</name>
<sequence length="264" mass="28434">MIVVKIGGRVVKNSLDKVILDIANINDKVILVHGGGDIVTDYTKRLGIEPVFVTSPEGIRSRYTTKEELEVYIMAMSLINKTITSKLCSLGKNAIGITGVDGGLLLAERKKRIIVIDERGKKRIIEGGYTGKVKEVRSEVINHLMKLFDIIVVSPLALDVEESTPLNIDGDQAAFAISKAVKVNVLVILSDVEGVLVEGKVVDRLTPEEAKELSKKIGPGMNRKLLMAAESVENGVNKVIIGSGVKDRPVSSALELNGTVIVNG</sequence>
<feature type="chain" id="PRO_1000202573" description="[LysW]-aminoadipate/[LysW]-glutamate kinase">
    <location>
        <begin position="1"/>
        <end position="264"/>
    </location>
</feature>
<feature type="binding site" evidence="1">
    <location>
        <begin position="35"/>
        <end position="36"/>
    </location>
    <ligand>
        <name>substrate</name>
    </ligand>
</feature>
<feature type="binding site" evidence="1">
    <location>
        <position position="62"/>
    </location>
    <ligand>
        <name>substrate</name>
    </ligand>
</feature>
<feature type="binding site" evidence="1">
    <location>
        <position position="167"/>
    </location>
    <ligand>
        <name>substrate</name>
    </ligand>
</feature>
<feature type="site" description="Transition state stabilizer" evidence="1">
    <location>
        <position position="5"/>
    </location>
</feature>
<feature type="site" description="Transition state stabilizer" evidence="1">
    <location>
        <position position="224"/>
    </location>
</feature>
<organism>
    <name type="scientific">Saccharolobus islandicus (strain Y.G.57.14 / Yellowstone #1)</name>
    <name type="common">Sulfolobus islandicus</name>
    <dbReference type="NCBI Taxonomy" id="439386"/>
    <lineage>
        <taxon>Archaea</taxon>
        <taxon>Thermoproteota</taxon>
        <taxon>Thermoprotei</taxon>
        <taxon>Sulfolobales</taxon>
        <taxon>Sulfolobaceae</taxon>
        <taxon>Saccharolobus</taxon>
    </lineage>
</organism>
<accession>C3N871</accession>
<keyword id="KW-0028">Amino-acid biosynthesis</keyword>
<keyword id="KW-0055">Arginine biosynthesis</keyword>
<keyword id="KW-0067">ATP-binding</keyword>
<keyword id="KW-0963">Cytoplasm</keyword>
<keyword id="KW-0418">Kinase</keyword>
<keyword id="KW-0457">Lysine biosynthesis</keyword>
<keyword id="KW-0547">Nucleotide-binding</keyword>
<keyword id="KW-0808">Transferase</keyword>
<proteinExistence type="inferred from homology"/>
<comment type="function">
    <text evidence="1">Involved in both the arginine and lysine biosynthetic pathways. Phosphorylates the LysW-bound precursors glutamate (for arginine biosynthesis), respectively alpha-aminoadipate (for lysine biosynthesis).</text>
</comment>
<comment type="catalytic activity">
    <reaction evidence="1">
        <text>[amino-group carrier protein]-C-terminal-N-(1,4-dicarboxybutan-1-yl)-L-glutamine + ATP = [amino-group carrier protein]-C-terminal-N-(1-carboxy-5-phosphooxy-5-oxopentan-1-yl)-L-glutamine + ADP</text>
        <dbReference type="Rhea" id="RHEA:41944"/>
        <dbReference type="Rhea" id="RHEA-COMP:9694"/>
        <dbReference type="Rhea" id="RHEA-COMP:9712"/>
        <dbReference type="ChEBI" id="CHEBI:30616"/>
        <dbReference type="ChEBI" id="CHEBI:78499"/>
        <dbReference type="ChEBI" id="CHEBI:78503"/>
        <dbReference type="ChEBI" id="CHEBI:456216"/>
        <dbReference type="EC" id="2.7.2.17"/>
    </reaction>
</comment>
<comment type="catalytic activity">
    <reaction evidence="1">
        <text>[amino-group carrier protein]-C-terminal-gamma-(L-glutamyl)-L-glutamate + ATP = [amino-group carrier protein]-C-terminal-gamma-(5-phospho-L-glutamyl)-L-glutamate + ADP</text>
        <dbReference type="Rhea" id="RHEA:52632"/>
        <dbReference type="Rhea" id="RHEA-COMP:13311"/>
        <dbReference type="Rhea" id="RHEA-COMP:13313"/>
        <dbReference type="ChEBI" id="CHEBI:30616"/>
        <dbReference type="ChEBI" id="CHEBI:136714"/>
        <dbReference type="ChEBI" id="CHEBI:136717"/>
        <dbReference type="ChEBI" id="CHEBI:456216"/>
        <dbReference type="EC" id="2.7.2.19"/>
    </reaction>
</comment>
<comment type="pathway">
    <text evidence="1">Amino-acid biosynthesis; L-lysine biosynthesis via AAA pathway; L-lysine from L-alpha-aminoadipate (Thermus route): step 2/5.</text>
</comment>
<comment type="pathway">
    <text evidence="1">Amino-acid biosynthesis; L-arginine biosynthesis.</text>
</comment>
<comment type="subcellular location">
    <subcellularLocation>
        <location evidence="1">Cytoplasm</location>
    </subcellularLocation>
</comment>
<comment type="similarity">
    <text evidence="1">Belongs to the acetylglutamate kinase family. LysZ subfamily.</text>
</comment>
<evidence type="ECO:0000255" key="1">
    <source>
        <dbReference type="HAMAP-Rule" id="MF_02082"/>
    </source>
</evidence>
<reference key="1">
    <citation type="journal article" date="2009" name="Proc. Natl. Acad. Sci. U.S.A.">
        <title>Biogeography of the Sulfolobus islandicus pan-genome.</title>
        <authorList>
            <person name="Reno M.L."/>
            <person name="Held N.L."/>
            <person name="Fields C.J."/>
            <person name="Burke P.V."/>
            <person name="Whitaker R.J."/>
        </authorList>
    </citation>
    <scope>NUCLEOTIDE SEQUENCE [LARGE SCALE GENOMIC DNA]</scope>
    <source>
        <strain>Y.G.57.14 / Yellowstone #1</strain>
    </source>
</reference>
<protein>
    <recommendedName>
        <fullName evidence="1">[LysW]-aminoadipate/[LysW]-glutamate kinase</fullName>
        <ecNumber evidence="1">2.7.2.17</ecNumber>
        <ecNumber evidence="1">2.7.2.19</ecNumber>
    </recommendedName>
</protein>